<proteinExistence type="inferred from homology"/>
<reference key="1">
    <citation type="journal article" date="2004" name="Proc. Natl. Acad. Sci. U.S.A.">
        <title>The broad host range pathogen Pseudomonas aeruginosa strain PA14 carries two pathogenicity islands harboring plant and animal virulence genes.</title>
        <authorList>
            <person name="He J."/>
            <person name="Baldini R.L."/>
            <person name="Deziel E."/>
            <person name="Saucier M."/>
            <person name="Zhang Q."/>
            <person name="Liberati N.T."/>
            <person name="Lee D."/>
            <person name="Urbach J."/>
            <person name="Goodman H.M."/>
            <person name="Rahme L.G."/>
        </authorList>
    </citation>
    <scope>NUCLEOTIDE SEQUENCE [GENOMIC DNA]</scope>
    <source>
        <strain>PA14</strain>
    </source>
</reference>
<reference key="2">
    <citation type="journal article" date="2000" name="Nature">
        <title>Complete genome sequence of Pseudomonas aeruginosa PAO1, an opportunistic pathogen.</title>
        <authorList>
            <person name="Stover C.K."/>
            <person name="Pham X.-Q.T."/>
            <person name="Erwin A.L."/>
            <person name="Mizoguchi S.D."/>
            <person name="Warrener P."/>
            <person name="Hickey M.J."/>
            <person name="Brinkman F.S.L."/>
            <person name="Hufnagle W.O."/>
            <person name="Kowalik D.J."/>
            <person name="Lagrou M."/>
            <person name="Garber R.L."/>
            <person name="Goltry L."/>
            <person name="Tolentino E."/>
            <person name="Westbrock-Wadman S."/>
            <person name="Yuan Y."/>
            <person name="Brody L.L."/>
            <person name="Coulter S.N."/>
            <person name="Folger K.R."/>
            <person name="Kas A."/>
            <person name="Larbig K."/>
            <person name="Lim R.M."/>
            <person name="Smith K.A."/>
            <person name="Spencer D.H."/>
            <person name="Wong G.K.-S."/>
            <person name="Wu Z."/>
            <person name="Paulsen I.T."/>
            <person name="Reizer J."/>
            <person name="Saier M.H. Jr."/>
            <person name="Hancock R.E.W."/>
            <person name="Lory S."/>
            <person name="Olson M.V."/>
        </authorList>
    </citation>
    <scope>NUCLEOTIDE SEQUENCE [LARGE SCALE GENOMIC DNA]</scope>
    <source>
        <strain>ATCC 15692 / DSM 22644 / CIP 104116 / JCM 14847 / LMG 12228 / 1C / PRS 101 / PAO1</strain>
    </source>
</reference>
<reference key="3">
    <citation type="journal article" date="1993" name="Mol. Microbiol.">
        <title>PilS and PilR, a two-component transcriptional regulatory system controlling expression of type 4 fimbriae in Pseudomonas aeruginosa.</title>
        <authorList>
            <person name="Hobbs M."/>
            <person name="Collie E.S.R."/>
            <person name="Free P.D."/>
            <person name="Livingston S.P."/>
            <person name="Mattick J.S."/>
        </authorList>
    </citation>
    <scope>NUCLEOTIDE SEQUENCE [GENOMIC DNA] OF 1-185</scope>
    <source>
        <strain>ATCC 15692 / DSM 22644 / CIP 104116 / JCM 14847 / LMG 12228 / 1C / PRS 101 / PAO1</strain>
    </source>
</reference>
<feature type="chain" id="PRO_0000162697" description="Ribosomal large subunit pseudouridine synthase D">
    <location>
        <begin position="1"/>
        <end position="320"/>
    </location>
</feature>
<feature type="domain" description="S4 RNA-binding" evidence="3">
    <location>
        <begin position="18"/>
        <end position="90"/>
    </location>
</feature>
<feature type="active site" evidence="1">
    <location>
        <position position="138"/>
    </location>
</feature>
<feature type="sequence conflict" description="In Ref. 3; CAA78140." evidence="4" ref="3">
    <original>L</original>
    <variation>V</variation>
    <location>
        <position position="52"/>
    </location>
</feature>
<feature type="sequence conflict" description="In Ref. 1; AAP81266." evidence="4" ref="1">
    <original>D</original>
    <variation>E</variation>
    <location>
        <position position="303"/>
    </location>
</feature>
<organism>
    <name type="scientific">Pseudomonas aeruginosa (strain ATCC 15692 / DSM 22644 / CIP 104116 / JCM 14847 / LMG 12228 / 1C / PRS 101 / PAO1)</name>
    <dbReference type="NCBI Taxonomy" id="208964"/>
    <lineage>
        <taxon>Bacteria</taxon>
        <taxon>Pseudomonadati</taxon>
        <taxon>Pseudomonadota</taxon>
        <taxon>Gammaproteobacteria</taxon>
        <taxon>Pseudomonadales</taxon>
        <taxon>Pseudomonadaceae</taxon>
        <taxon>Pseudomonas</taxon>
    </lineage>
</organism>
<name>RLUD_PSEAE</name>
<sequence>MSDMIQRAAEVPFELGGQRLDQIAAQLFPEHSRSRLAGWIKDGRLTVDGAVLRPRDIVHSGAQLVLEAEQEAQGEWLAQDIELEIVYEDEHILVIDKPAGLVVHPAAGHQDGTLLNALLYHVPDIANVPRAGIVHRLDKDTTGLMVVAKTLEAHTKLVAQLQARSVSRIYEAIVIGVITSGGTIDAPIGRHGVQRQKMAVVDAGKVAVSHYRVLERFRAHTHTRVKLETGRTHQIRVHMSHIGYPLVGDPVYGGRFRIPPVASQTLVQTLREFPRQALHARFLELDHPATGVRMKWESPLPEDFLWLLSLLRQDREAFVG</sequence>
<keyword id="KW-0963">Cytoplasm</keyword>
<keyword id="KW-0413">Isomerase</keyword>
<keyword id="KW-1185">Reference proteome</keyword>
<keyword id="KW-0694">RNA-binding</keyword>
<keyword id="KW-0698">rRNA processing</keyword>
<accession>P33640</accession>
<accession>Q9HVN4</accession>
<gene>
    <name type="primary">rluD</name>
    <name type="ordered locus">PA4544</name>
</gene>
<dbReference type="EC" id="5.4.99.23" evidence="2"/>
<dbReference type="EMBL" id="AY273871">
    <property type="protein sequence ID" value="AAP81266.1"/>
    <property type="molecule type" value="Genomic_DNA"/>
</dbReference>
<dbReference type="EMBL" id="AE004091">
    <property type="protein sequence ID" value="AAG07932.1"/>
    <property type="molecule type" value="Genomic_DNA"/>
</dbReference>
<dbReference type="EMBL" id="Z12154">
    <property type="protein sequence ID" value="CAA78140.1"/>
    <property type="molecule type" value="Genomic_DNA"/>
</dbReference>
<dbReference type="PIR" id="F83077">
    <property type="entry name" value="F83077"/>
</dbReference>
<dbReference type="PIR" id="S33675">
    <property type="entry name" value="S26602"/>
</dbReference>
<dbReference type="RefSeq" id="NP_253234.1">
    <property type="nucleotide sequence ID" value="NC_002516.2"/>
</dbReference>
<dbReference type="RefSeq" id="WP_003094686.1">
    <property type="nucleotide sequence ID" value="NZ_QZGE01000004.1"/>
</dbReference>
<dbReference type="SMR" id="P33640"/>
<dbReference type="FunCoup" id="P33640">
    <property type="interactions" value="760"/>
</dbReference>
<dbReference type="STRING" id="208964.PA4544"/>
<dbReference type="PaxDb" id="208964-PA4544"/>
<dbReference type="DNASU" id="877896"/>
<dbReference type="GeneID" id="877896"/>
<dbReference type="KEGG" id="pae:PA4544"/>
<dbReference type="PATRIC" id="fig|208964.12.peg.4755"/>
<dbReference type="PseudoCAP" id="PA4544"/>
<dbReference type="HOGENOM" id="CLU_016902_4_0_6"/>
<dbReference type="InParanoid" id="P33640"/>
<dbReference type="OrthoDB" id="9807829at2"/>
<dbReference type="PhylomeDB" id="P33640"/>
<dbReference type="BioCyc" id="PAER208964:G1FZ6-4637-MONOMER"/>
<dbReference type="Proteomes" id="UP000002438">
    <property type="component" value="Chromosome"/>
</dbReference>
<dbReference type="GO" id="GO:0005737">
    <property type="term" value="C:cytoplasm"/>
    <property type="evidence" value="ECO:0007669"/>
    <property type="project" value="UniProtKB-SubCell"/>
</dbReference>
<dbReference type="GO" id="GO:0160140">
    <property type="term" value="F:23S rRNA pseudouridine(1911/1915/1917) synthase activity"/>
    <property type="evidence" value="ECO:0007669"/>
    <property type="project" value="UniProtKB-EC"/>
</dbReference>
<dbReference type="GO" id="GO:0009982">
    <property type="term" value="F:pseudouridine synthase activity"/>
    <property type="evidence" value="ECO:0000318"/>
    <property type="project" value="GO_Central"/>
</dbReference>
<dbReference type="GO" id="GO:0003723">
    <property type="term" value="F:RNA binding"/>
    <property type="evidence" value="ECO:0007669"/>
    <property type="project" value="UniProtKB-KW"/>
</dbReference>
<dbReference type="GO" id="GO:0000455">
    <property type="term" value="P:enzyme-directed rRNA pseudouridine synthesis"/>
    <property type="evidence" value="ECO:0000318"/>
    <property type="project" value="GO_Central"/>
</dbReference>
<dbReference type="CDD" id="cd02869">
    <property type="entry name" value="PseudoU_synth_RluA_like"/>
    <property type="match status" value="1"/>
</dbReference>
<dbReference type="CDD" id="cd00165">
    <property type="entry name" value="S4"/>
    <property type="match status" value="1"/>
</dbReference>
<dbReference type="FunFam" id="3.10.290.10:FF:000011">
    <property type="entry name" value="Pseudouridine synthase"/>
    <property type="match status" value="1"/>
</dbReference>
<dbReference type="FunFam" id="3.30.2350.10:FF:000006">
    <property type="entry name" value="Pseudouridine synthase"/>
    <property type="match status" value="1"/>
</dbReference>
<dbReference type="Gene3D" id="3.30.2350.10">
    <property type="entry name" value="Pseudouridine synthase"/>
    <property type="match status" value="1"/>
</dbReference>
<dbReference type="Gene3D" id="3.10.290.10">
    <property type="entry name" value="RNA-binding S4 domain"/>
    <property type="match status" value="1"/>
</dbReference>
<dbReference type="InterPro" id="IPR020103">
    <property type="entry name" value="PsdUridine_synth_cat_dom_sf"/>
</dbReference>
<dbReference type="InterPro" id="IPR006224">
    <property type="entry name" value="PsdUridine_synth_RluA-like_CS"/>
</dbReference>
<dbReference type="InterPro" id="IPR006225">
    <property type="entry name" value="PsdUridine_synth_RluC/D"/>
</dbReference>
<dbReference type="InterPro" id="IPR006145">
    <property type="entry name" value="PsdUridine_synth_RsuA/RluA"/>
</dbReference>
<dbReference type="InterPro" id="IPR050188">
    <property type="entry name" value="RluA_PseudoU_synthase"/>
</dbReference>
<dbReference type="InterPro" id="IPR002942">
    <property type="entry name" value="S4_RNA-bd"/>
</dbReference>
<dbReference type="InterPro" id="IPR036986">
    <property type="entry name" value="S4_RNA-bd_sf"/>
</dbReference>
<dbReference type="NCBIfam" id="NF008385">
    <property type="entry name" value="PRK11180.1"/>
    <property type="match status" value="1"/>
</dbReference>
<dbReference type="NCBIfam" id="TIGR00005">
    <property type="entry name" value="rluA_subfam"/>
    <property type="match status" value="1"/>
</dbReference>
<dbReference type="PANTHER" id="PTHR21600">
    <property type="entry name" value="MITOCHONDRIAL RNA PSEUDOURIDINE SYNTHASE"/>
    <property type="match status" value="1"/>
</dbReference>
<dbReference type="PANTHER" id="PTHR21600:SF44">
    <property type="entry name" value="RIBOSOMAL LARGE SUBUNIT PSEUDOURIDINE SYNTHASE D"/>
    <property type="match status" value="1"/>
</dbReference>
<dbReference type="Pfam" id="PF00849">
    <property type="entry name" value="PseudoU_synth_2"/>
    <property type="match status" value="1"/>
</dbReference>
<dbReference type="Pfam" id="PF01479">
    <property type="entry name" value="S4"/>
    <property type="match status" value="1"/>
</dbReference>
<dbReference type="SUPFAM" id="SSF55174">
    <property type="entry name" value="Alpha-L RNA-binding motif"/>
    <property type="match status" value="1"/>
</dbReference>
<dbReference type="SUPFAM" id="SSF55120">
    <property type="entry name" value="Pseudouridine synthase"/>
    <property type="match status" value="1"/>
</dbReference>
<dbReference type="PROSITE" id="PS01129">
    <property type="entry name" value="PSI_RLU"/>
    <property type="match status" value="1"/>
</dbReference>
<dbReference type="PROSITE" id="PS50889">
    <property type="entry name" value="S4"/>
    <property type="match status" value="1"/>
</dbReference>
<evidence type="ECO:0000250" key="1"/>
<evidence type="ECO:0000250" key="2">
    <source>
        <dbReference type="UniProtKB" id="P33643"/>
    </source>
</evidence>
<evidence type="ECO:0000255" key="3">
    <source>
        <dbReference type="PROSITE-ProRule" id="PRU00182"/>
    </source>
</evidence>
<evidence type="ECO:0000305" key="4"/>
<protein>
    <recommendedName>
        <fullName evidence="2">Ribosomal large subunit pseudouridine synthase D</fullName>
        <ecNumber evidence="2">5.4.99.23</ecNumber>
    </recommendedName>
    <alternativeName>
        <fullName>23S rRNA pseudouridine(1911/1915/1917) synthase</fullName>
    </alternativeName>
    <alternativeName>
        <fullName>rRNA pseudouridylate synthase D</fullName>
    </alternativeName>
    <alternativeName>
        <fullName>rRNA-uridine isomerase D</fullName>
    </alternativeName>
</protein>
<comment type="function">
    <text evidence="2">Responsible for synthesis of pseudouridine from uracil at positions 1911, 1915 and 1917 in 23S ribosomal RNA.</text>
</comment>
<comment type="catalytic activity">
    <reaction evidence="2">
        <text>uridine(1911/1915/1917) in 23S rRNA = pseudouridine(1911/1915/1917) in 23S rRNA</text>
        <dbReference type="Rhea" id="RHEA:42524"/>
        <dbReference type="Rhea" id="RHEA-COMP:10097"/>
        <dbReference type="Rhea" id="RHEA-COMP:10098"/>
        <dbReference type="ChEBI" id="CHEBI:65314"/>
        <dbReference type="ChEBI" id="CHEBI:65315"/>
        <dbReference type="EC" id="5.4.99.23"/>
    </reaction>
</comment>
<comment type="subcellular location">
    <subcellularLocation>
        <location evidence="2">Cytoplasm</location>
    </subcellularLocation>
    <text evidence="2">Associates with late stage pre-50S ribosomal subunits.</text>
</comment>
<comment type="similarity">
    <text evidence="4">Belongs to the pseudouridine synthase RluA family.</text>
</comment>